<gene>
    <name evidence="1" type="primary">rplO</name>
    <name type="ordered locus">CHU_3143</name>
</gene>
<sequence>MKLHTLRPAKGSVKTSKRIGRGTGSGRGGTSTKGHKGAKSRSGYSSKIGFEGGQMPLQRRLPKFGFKPLNKIEFKPINLDELLELIEKTGASVIDTALMNQNGLIGKNDKVKVLARGEVKSIKAEIIAHAFSASASEAITNAGGKVTLIG</sequence>
<feature type="chain" id="PRO_1000054456" description="Large ribosomal subunit protein uL15">
    <location>
        <begin position="1"/>
        <end position="150"/>
    </location>
</feature>
<feature type="region of interest" description="Disordered" evidence="2">
    <location>
        <begin position="1"/>
        <end position="51"/>
    </location>
</feature>
<feature type="compositionally biased region" description="Gly residues" evidence="2">
    <location>
        <begin position="21"/>
        <end position="31"/>
    </location>
</feature>
<keyword id="KW-1185">Reference proteome</keyword>
<keyword id="KW-0687">Ribonucleoprotein</keyword>
<keyword id="KW-0689">Ribosomal protein</keyword>
<keyword id="KW-0694">RNA-binding</keyword>
<keyword id="KW-0699">rRNA-binding</keyword>
<protein>
    <recommendedName>
        <fullName evidence="1">Large ribosomal subunit protein uL15</fullName>
    </recommendedName>
    <alternativeName>
        <fullName evidence="3">50S ribosomal protein L15</fullName>
    </alternativeName>
</protein>
<dbReference type="EMBL" id="CP000383">
    <property type="protein sequence ID" value="ABG60383.1"/>
    <property type="molecule type" value="Genomic_DNA"/>
</dbReference>
<dbReference type="RefSeq" id="WP_011586492.1">
    <property type="nucleotide sequence ID" value="NC_008255.1"/>
</dbReference>
<dbReference type="SMR" id="Q11QD1"/>
<dbReference type="STRING" id="269798.CHU_3143"/>
<dbReference type="KEGG" id="chu:CHU_3143"/>
<dbReference type="eggNOG" id="COG0200">
    <property type="taxonomic scope" value="Bacteria"/>
</dbReference>
<dbReference type="HOGENOM" id="CLU_055188_4_0_10"/>
<dbReference type="OrthoDB" id="9810293at2"/>
<dbReference type="Proteomes" id="UP000001822">
    <property type="component" value="Chromosome"/>
</dbReference>
<dbReference type="GO" id="GO:0022625">
    <property type="term" value="C:cytosolic large ribosomal subunit"/>
    <property type="evidence" value="ECO:0007669"/>
    <property type="project" value="TreeGrafter"/>
</dbReference>
<dbReference type="GO" id="GO:0019843">
    <property type="term" value="F:rRNA binding"/>
    <property type="evidence" value="ECO:0007669"/>
    <property type="project" value="UniProtKB-UniRule"/>
</dbReference>
<dbReference type="GO" id="GO:0003735">
    <property type="term" value="F:structural constituent of ribosome"/>
    <property type="evidence" value="ECO:0007669"/>
    <property type="project" value="InterPro"/>
</dbReference>
<dbReference type="GO" id="GO:0006412">
    <property type="term" value="P:translation"/>
    <property type="evidence" value="ECO:0007669"/>
    <property type="project" value="UniProtKB-UniRule"/>
</dbReference>
<dbReference type="Gene3D" id="3.100.10.10">
    <property type="match status" value="1"/>
</dbReference>
<dbReference type="HAMAP" id="MF_01341">
    <property type="entry name" value="Ribosomal_uL15"/>
    <property type="match status" value="1"/>
</dbReference>
<dbReference type="InterPro" id="IPR030878">
    <property type="entry name" value="Ribosomal_uL15"/>
</dbReference>
<dbReference type="InterPro" id="IPR021131">
    <property type="entry name" value="Ribosomal_uL15/eL18"/>
</dbReference>
<dbReference type="InterPro" id="IPR036227">
    <property type="entry name" value="Ribosomal_uL15/eL18_sf"/>
</dbReference>
<dbReference type="InterPro" id="IPR005749">
    <property type="entry name" value="Ribosomal_uL15_bac-type"/>
</dbReference>
<dbReference type="NCBIfam" id="TIGR01071">
    <property type="entry name" value="rplO_bact"/>
    <property type="match status" value="1"/>
</dbReference>
<dbReference type="PANTHER" id="PTHR12934">
    <property type="entry name" value="50S RIBOSOMAL PROTEIN L15"/>
    <property type="match status" value="1"/>
</dbReference>
<dbReference type="PANTHER" id="PTHR12934:SF11">
    <property type="entry name" value="LARGE RIBOSOMAL SUBUNIT PROTEIN UL15M"/>
    <property type="match status" value="1"/>
</dbReference>
<dbReference type="Pfam" id="PF00828">
    <property type="entry name" value="Ribosomal_L27A"/>
    <property type="match status" value="1"/>
</dbReference>
<dbReference type="SUPFAM" id="SSF52080">
    <property type="entry name" value="Ribosomal proteins L15p and L18e"/>
    <property type="match status" value="1"/>
</dbReference>
<reference key="1">
    <citation type="journal article" date="2007" name="Appl. Environ. Microbiol.">
        <title>Genome sequence of the cellulolytic gliding bacterium Cytophaga hutchinsonii.</title>
        <authorList>
            <person name="Xie G."/>
            <person name="Bruce D.C."/>
            <person name="Challacombe J.F."/>
            <person name="Chertkov O."/>
            <person name="Detter J.C."/>
            <person name="Gilna P."/>
            <person name="Han C.S."/>
            <person name="Lucas S."/>
            <person name="Misra M."/>
            <person name="Myers G.L."/>
            <person name="Richardson P."/>
            <person name="Tapia R."/>
            <person name="Thayer N."/>
            <person name="Thompson L.S."/>
            <person name="Brettin T.S."/>
            <person name="Henrissat B."/>
            <person name="Wilson D.B."/>
            <person name="McBride M.J."/>
        </authorList>
    </citation>
    <scope>NUCLEOTIDE SEQUENCE [LARGE SCALE GENOMIC DNA]</scope>
    <source>
        <strain>ATCC 33406 / DSM 1761 / JCM 20678 / CIP 103989 / IAM 12607 / NBRC 15051 / NCIMB 9469 / D465</strain>
    </source>
</reference>
<name>RL15_CYTH3</name>
<organism>
    <name type="scientific">Cytophaga hutchinsonii (strain ATCC 33406 / DSM 1761 / CIP 103989 / NBRC 15051 / NCIMB 9469 / D465)</name>
    <dbReference type="NCBI Taxonomy" id="269798"/>
    <lineage>
        <taxon>Bacteria</taxon>
        <taxon>Pseudomonadati</taxon>
        <taxon>Bacteroidota</taxon>
        <taxon>Cytophagia</taxon>
        <taxon>Cytophagales</taxon>
        <taxon>Cytophagaceae</taxon>
        <taxon>Cytophaga</taxon>
    </lineage>
</organism>
<evidence type="ECO:0000255" key="1">
    <source>
        <dbReference type="HAMAP-Rule" id="MF_01341"/>
    </source>
</evidence>
<evidence type="ECO:0000256" key="2">
    <source>
        <dbReference type="SAM" id="MobiDB-lite"/>
    </source>
</evidence>
<evidence type="ECO:0000305" key="3"/>
<accession>Q11QD1</accession>
<proteinExistence type="inferred from homology"/>
<comment type="function">
    <text evidence="1">Binds to the 23S rRNA.</text>
</comment>
<comment type="subunit">
    <text evidence="1">Part of the 50S ribosomal subunit.</text>
</comment>
<comment type="similarity">
    <text evidence="1">Belongs to the universal ribosomal protein uL15 family.</text>
</comment>